<protein>
    <recommendedName>
        <fullName>Protein Wnt-2</fullName>
    </recommendedName>
</protein>
<accession>Q2QL76</accession>
<keyword id="KW-0217">Developmental protein</keyword>
<keyword id="KW-1015">Disulfide bond</keyword>
<keyword id="KW-0272">Extracellular matrix</keyword>
<keyword id="KW-0325">Glycoprotein</keyword>
<keyword id="KW-0449">Lipoprotein</keyword>
<keyword id="KW-0964">Secreted</keyword>
<keyword id="KW-0732">Signal</keyword>
<keyword id="KW-0879">Wnt signaling pathway</keyword>
<evidence type="ECO:0000250" key="1"/>
<evidence type="ECO:0000250" key="2">
    <source>
        <dbReference type="UniProtKB" id="P27467"/>
    </source>
</evidence>
<evidence type="ECO:0000250" key="3">
    <source>
        <dbReference type="UniProtKB" id="P28026"/>
    </source>
</evidence>
<evidence type="ECO:0000250" key="4">
    <source>
        <dbReference type="UniProtKB" id="P56704"/>
    </source>
</evidence>
<evidence type="ECO:0000255" key="5"/>
<evidence type="ECO:0000305" key="6"/>
<comment type="function">
    <text evidence="1">Ligand for members of the frizzled family of seven transmembrane receptors. Probable developmental protein. May be a signaling molecule which affects the development of discrete regions of tissues. Is likely to signal over only few cell diameters (By similarity).</text>
</comment>
<comment type="subcellular location">
    <subcellularLocation>
        <location evidence="1">Secreted</location>
        <location evidence="1">Extracellular space</location>
        <location evidence="1">Extracellular matrix</location>
    </subcellularLocation>
</comment>
<comment type="PTM">
    <text evidence="2 4">Palmitoleoylation is required for efficient binding to frizzled receptors. Depalmitoleoylation leads to Wnt signaling pathway inhibition.</text>
</comment>
<comment type="similarity">
    <text evidence="6">Belongs to the Wnt family.</text>
</comment>
<name>WNT2_DIDVI</name>
<sequence length="360" mass="40518">MNSSSLFGIWLSVPLILSWVTPQVSSSWWYMRAVGSSRVMCDNVPGLVSRQRQLCHRHPEVMRSIGLGVAEWTAECQHQFRQHRWNCHTLDRDHNLFGKVLLRSSREAAFVYAISSAGVVFAITRACSQGELKSCSCDPKKKGTSKDSKGTFDWGGCSDNIDYGIKFARAFVDAKERKGKDARALMNLHNNRAGRKAVKRFLKQECKCHGVSGSCTLRTCWLAMADFRKTGDYLWKKYNGAIQVVMNQDGTGFTVANKRFKKPTKNDLVYFENSPDYCIRDRDAGSLGTAGRVCNLTSRGMDSCEVMCCGRGYDTSRVTRMTKCECKFHWCCAVRCQDCLEVVDVHTCKAPKSPDWVAPT</sequence>
<gene>
    <name type="primary">WNT2</name>
</gene>
<dbReference type="EMBL" id="DP000023">
    <property type="protein sequence ID" value="ABB89833.1"/>
    <property type="molecule type" value="Genomic_DNA"/>
</dbReference>
<dbReference type="SMR" id="Q2QL76"/>
<dbReference type="GlyCosmos" id="Q2QL76">
    <property type="glycosylation" value="1 site, No reported glycans"/>
</dbReference>
<dbReference type="GO" id="GO:0005615">
    <property type="term" value="C:extracellular space"/>
    <property type="evidence" value="ECO:0007669"/>
    <property type="project" value="TreeGrafter"/>
</dbReference>
<dbReference type="GO" id="GO:0005125">
    <property type="term" value="F:cytokine activity"/>
    <property type="evidence" value="ECO:0007669"/>
    <property type="project" value="TreeGrafter"/>
</dbReference>
<dbReference type="GO" id="GO:0005109">
    <property type="term" value="F:frizzled binding"/>
    <property type="evidence" value="ECO:0007669"/>
    <property type="project" value="TreeGrafter"/>
</dbReference>
<dbReference type="GO" id="GO:0048513">
    <property type="term" value="P:animal organ development"/>
    <property type="evidence" value="ECO:0007669"/>
    <property type="project" value="UniProtKB-ARBA"/>
</dbReference>
<dbReference type="GO" id="GO:0060070">
    <property type="term" value="P:canonical Wnt signaling pathway"/>
    <property type="evidence" value="ECO:0007669"/>
    <property type="project" value="TreeGrafter"/>
</dbReference>
<dbReference type="GO" id="GO:0045165">
    <property type="term" value="P:cell fate commitment"/>
    <property type="evidence" value="ECO:0007669"/>
    <property type="project" value="TreeGrafter"/>
</dbReference>
<dbReference type="GO" id="GO:0030182">
    <property type="term" value="P:neuron differentiation"/>
    <property type="evidence" value="ECO:0007669"/>
    <property type="project" value="TreeGrafter"/>
</dbReference>
<dbReference type="CDD" id="cd19345">
    <property type="entry name" value="Wnt_Wnt2"/>
    <property type="match status" value="1"/>
</dbReference>
<dbReference type="FunFam" id="3.30.2460.20:FF:000001">
    <property type="entry name" value="Wnt homolog"/>
    <property type="match status" value="1"/>
</dbReference>
<dbReference type="Gene3D" id="3.30.2460.20">
    <property type="match status" value="1"/>
</dbReference>
<dbReference type="InterPro" id="IPR005817">
    <property type="entry name" value="Wnt"/>
</dbReference>
<dbReference type="InterPro" id="IPR009140">
    <property type="entry name" value="Wnt2"/>
</dbReference>
<dbReference type="InterPro" id="IPR043158">
    <property type="entry name" value="Wnt_C"/>
</dbReference>
<dbReference type="InterPro" id="IPR018161">
    <property type="entry name" value="Wnt_CS"/>
</dbReference>
<dbReference type="PANTHER" id="PTHR12027:SF86">
    <property type="entry name" value="PROTEIN WNT-2"/>
    <property type="match status" value="1"/>
</dbReference>
<dbReference type="PANTHER" id="PTHR12027">
    <property type="entry name" value="WNT RELATED"/>
    <property type="match status" value="1"/>
</dbReference>
<dbReference type="Pfam" id="PF00110">
    <property type="entry name" value="wnt"/>
    <property type="match status" value="1"/>
</dbReference>
<dbReference type="PRINTS" id="PR01842">
    <property type="entry name" value="WNT2PROTEIN"/>
</dbReference>
<dbReference type="PRINTS" id="PR01349">
    <property type="entry name" value="WNTPROTEIN"/>
</dbReference>
<dbReference type="SMART" id="SM00097">
    <property type="entry name" value="WNT1"/>
    <property type="match status" value="1"/>
</dbReference>
<dbReference type="PROSITE" id="PS00246">
    <property type="entry name" value="WNT1"/>
    <property type="match status" value="1"/>
</dbReference>
<feature type="signal peptide" evidence="5">
    <location>
        <begin position="1"/>
        <end position="26"/>
    </location>
</feature>
<feature type="chain" id="PRO_0000226063" description="Protein Wnt-2">
    <location>
        <begin position="27"/>
        <end position="360"/>
    </location>
</feature>
<feature type="lipid moiety-binding region" description="O-palmitoleoyl serine; by PORCN" evidence="4">
    <location>
        <position position="212"/>
    </location>
</feature>
<feature type="glycosylation site" description="N-linked (GlcNAc...) asparagine" evidence="5">
    <location>
        <position position="295"/>
    </location>
</feature>
<feature type="disulfide bond" evidence="3">
    <location>
        <begin position="76"/>
        <end position="87"/>
    </location>
</feature>
<feature type="disulfide bond" evidence="3">
    <location>
        <begin position="127"/>
        <end position="135"/>
    </location>
</feature>
<feature type="disulfide bond" evidence="3">
    <location>
        <begin position="137"/>
        <end position="157"/>
    </location>
</feature>
<feature type="disulfide bond" evidence="3">
    <location>
        <begin position="206"/>
        <end position="220"/>
    </location>
</feature>
<feature type="disulfide bond" evidence="3">
    <location>
        <begin position="208"/>
        <end position="215"/>
    </location>
</feature>
<feature type="disulfide bond" evidence="3">
    <location>
        <begin position="278"/>
        <end position="309"/>
    </location>
</feature>
<feature type="disulfide bond" evidence="3">
    <location>
        <begin position="294"/>
        <end position="304"/>
    </location>
</feature>
<feature type="disulfide bond" evidence="3">
    <location>
        <begin position="308"/>
        <end position="348"/>
    </location>
</feature>
<feature type="disulfide bond" evidence="3">
    <location>
        <begin position="324"/>
        <end position="339"/>
    </location>
</feature>
<feature type="disulfide bond" evidence="3">
    <location>
        <begin position="326"/>
        <end position="336"/>
    </location>
</feature>
<feature type="disulfide bond" evidence="3">
    <location>
        <begin position="331"/>
        <end position="332"/>
    </location>
</feature>
<proteinExistence type="inferred from homology"/>
<reference key="1">
    <citation type="submission" date="2005-11" db="EMBL/GenBank/DDBJ databases">
        <title>NISC comparative sequencing initiative.</title>
        <authorList>
            <person name="Antonellis A."/>
            <person name="Ayele K."/>
            <person name="Benjamin B."/>
            <person name="Blakesley R.W."/>
            <person name="Boakye A."/>
            <person name="Bouffard G.G."/>
            <person name="Brinkley C."/>
            <person name="Brooks S."/>
            <person name="Chu G."/>
            <person name="Coleman H."/>
            <person name="Engle J."/>
            <person name="Gestole M."/>
            <person name="Greene A."/>
            <person name="Guan X."/>
            <person name="Gupta J."/>
            <person name="Haghighi P."/>
            <person name="Han J."/>
            <person name="Hansen N."/>
            <person name="Ho S.-L."/>
            <person name="Hu P."/>
            <person name="Hunter G."/>
            <person name="Hurle B."/>
            <person name="Idol J.R."/>
            <person name="Kwong P."/>
            <person name="Laric P."/>
            <person name="Larson S."/>
            <person name="Lee-Lin S.-Q."/>
            <person name="Legaspi R."/>
            <person name="Madden M."/>
            <person name="Maduro Q.L."/>
            <person name="Maduro V.B."/>
            <person name="Margulies E.H."/>
            <person name="Masiello C."/>
            <person name="Maskeri B."/>
            <person name="McDowell J."/>
            <person name="Mojidi H.A."/>
            <person name="Mullikin J.C."/>
            <person name="Oestreicher J.S."/>
            <person name="Park M."/>
            <person name="Portnoy M.E."/>
            <person name="Prasad A."/>
            <person name="Puri O."/>
            <person name="Reddix-Dugue N."/>
            <person name="Schandler K."/>
            <person name="Schueler M.G."/>
            <person name="Sison C."/>
            <person name="Stantripop S."/>
            <person name="Stephen E."/>
            <person name="Taye A."/>
            <person name="Thomas J.W."/>
            <person name="Thomas P.J."/>
            <person name="Tsipouri V."/>
            <person name="Ung L."/>
            <person name="Vogt J.L."/>
            <person name="Wetherby K.D."/>
            <person name="Young A."/>
            <person name="Green E.D."/>
        </authorList>
    </citation>
    <scope>NUCLEOTIDE SEQUENCE [LARGE SCALE GENOMIC DNA]</scope>
</reference>
<organism>
    <name type="scientific">Didelphis virginiana</name>
    <name type="common">North American opossum</name>
    <name type="synonym">Didelphis marsupialis virginiana</name>
    <dbReference type="NCBI Taxonomy" id="9267"/>
    <lineage>
        <taxon>Eukaryota</taxon>
        <taxon>Metazoa</taxon>
        <taxon>Chordata</taxon>
        <taxon>Craniata</taxon>
        <taxon>Vertebrata</taxon>
        <taxon>Euteleostomi</taxon>
        <taxon>Mammalia</taxon>
        <taxon>Metatheria</taxon>
        <taxon>Didelphimorphia</taxon>
        <taxon>Didelphidae</taxon>
        <taxon>Didelphis</taxon>
    </lineage>
</organism>